<dbReference type="EC" id="1.2.1.10" evidence="1"/>
<dbReference type="EMBL" id="AP006618">
    <property type="protein sequence ID" value="BAD58166.1"/>
    <property type="molecule type" value="Genomic_DNA"/>
</dbReference>
<dbReference type="SMR" id="Q5YUH5"/>
<dbReference type="STRING" id="247156.NFA_33190"/>
<dbReference type="KEGG" id="nfa:NFA_33190"/>
<dbReference type="eggNOG" id="COG4569">
    <property type="taxonomic scope" value="Bacteria"/>
</dbReference>
<dbReference type="HOGENOM" id="CLU_062208_0_0_11"/>
<dbReference type="Proteomes" id="UP000006820">
    <property type="component" value="Chromosome"/>
</dbReference>
<dbReference type="GO" id="GO:0008774">
    <property type="term" value="F:acetaldehyde dehydrogenase (acetylating) activity"/>
    <property type="evidence" value="ECO:0007669"/>
    <property type="project" value="UniProtKB-UniRule"/>
</dbReference>
<dbReference type="GO" id="GO:0051287">
    <property type="term" value="F:NAD binding"/>
    <property type="evidence" value="ECO:0007669"/>
    <property type="project" value="UniProtKB-UniRule"/>
</dbReference>
<dbReference type="GO" id="GO:0009056">
    <property type="term" value="P:catabolic process"/>
    <property type="evidence" value="ECO:0007669"/>
    <property type="project" value="UniProtKB-KW"/>
</dbReference>
<dbReference type="CDD" id="cd23933">
    <property type="entry name" value="ALDH_C"/>
    <property type="match status" value="1"/>
</dbReference>
<dbReference type="Gene3D" id="3.30.360.10">
    <property type="entry name" value="Dihydrodipicolinate Reductase, domain 2"/>
    <property type="match status" value="1"/>
</dbReference>
<dbReference type="Gene3D" id="3.40.50.720">
    <property type="entry name" value="NAD(P)-binding Rossmann-like Domain"/>
    <property type="match status" value="1"/>
</dbReference>
<dbReference type="HAMAP" id="MF_01657">
    <property type="entry name" value="Ac_ald_DH_ac"/>
    <property type="match status" value="1"/>
</dbReference>
<dbReference type="InterPro" id="IPR003361">
    <property type="entry name" value="Acetaldehyde_dehydrogenase"/>
</dbReference>
<dbReference type="InterPro" id="IPR015426">
    <property type="entry name" value="Acetylaldehyde_DH_C"/>
</dbReference>
<dbReference type="InterPro" id="IPR036291">
    <property type="entry name" value="NAD(P)-bd_dom_sf"/>
</dbReference>
<dbReference type="InterPro" id="IPR000534">
    <property type="entry name" value="Semialdehyde_DH_NAD-bd"/>
</dbReference>
<dbReference type="NCBIfam" id="TIGR03215">
    <property type="entry name" value="ac_ald_DH_ac"/>
    <property type="match status" value="1"/>
</dbReference>
<dbReference type="NCBIfam" id="NF006157">
    <property type="entry name" value="PRK08300.1"/>
    <property type="match status" value="1"/>
</dbReference>
<dbReference type="Pfam" id="PF09290">
    <property type="entry name" value="AcetDehyd-dimer"/>
    <property type="match status" value="1"/>
</dbReference>
<dbReference type="PIRSF" id="PIRSF015689">
    <property type="entry name" value="Actaldh_dh_actl"/>
    <property type="match status" value="1"/>
</dbReference>
<dbReference type="SMART" id="SM00859">
    <property type="entry name" value="Semialdhyde_dh"/>
    <property type="match status" value="1"/>
</dbReference>
<dbReference type="SUPFAM" id="SSF55347">
    <property type="entry name" value="Glyceraldehyde-3-phosphate dehydrogenase-like, C-terminal domain"/>
    <property type="match status" value="1"/>
</dbReference>
<dbReference type="SUPFAM" id="SSF51735">
    <property type="entry name" value="NAD(P)-binding Rossmann-fold domains"/>
    <property type="match status" value="1"/>
</dbReference>
<sequence length="328" mass="34005">MNHMSDPTTVKVAVIGSGNIGTDLMIKVIRHSRVLEMGAMVGIDPDSDGLARARRLGVPTTSDGVEGLLALPGFADIEVIFDATSAKAHAANAALLQPLGKRLIDLTPAALGPFVVPAVNVDEHRDAPNVNMVTCGGQATIPIVAAVSRVAPVAYAEIVASIASKSAGPGTRANIDEFTETTAHAVETVGGARRGKAIIILNPAEPPLIMRDTVLCLATAPDPATRSAIRESIEEMVARVAGYVPGYRLKQQIQITEIPPDQPVHTLAADGGPAPTHQVSVFLEVEGAAHYLPSYAGNLDIMTSAALRYAESIAATVTAAPADQGATR</sequence>
<gene>
    <name type="ordered locus">NFA_33190</name>
</gene>
<organism>
    <name type="scientific">Nocardia farcinica (strain IFM 10152)</name>
    <dbReference type="NCBI Taxonomy" id="247156"/>
    <lineage>
        <taxon>Bacteria</taxon>
        <taxon>Bacillati</taxon>
        <taxon>Actinomycetota</taxon>
        <taxon>Actinomycetes</taxon>
        <taxon>Mycobacteriales</taxon>
        <taxon>Nocardiaceae</taxon>
        <taxon>Nocardia</taxon>
    </lineage>
</organism>
<reference key="1">
    <citation type="journal article" date="2004" name="Proc. Natl. Acad. Sci. U.S.A.">
        <title>The complete genomic sequence of Nocardia farcinica IFM 10152.</title>
        <authorList>
            <person name="Ishikawa J."/>
            <person name="Yamashita A."/>
            <person name="Mikami Y."/>
            <person name="Hoshino Y."/>
            <person name="Kurita H."/>
            <person name="Hotta K."/>
            <person name="Shiba T."/>
            <person name="Hattori M."/>
        </authorList>
    </citation>
    <scope>NUCLEOTIDE SEQUENCE [LARGE SCALE GENOMIC DNA]</scope>
    <source>
        <strain>IFM 10152</strain>
    </source>
</reference>
<feature type="chain" id="PRO_0000387697" description="Acetaldehyde dehydrogenase 3">
    <location>
        <begin position="1"/>
        <end position="328"/>
    </location>
</feature>
<feature type="active site" description="Acyl-thioester intermediate" evidence="1">
    <location>
        <position position="135"/>
    </location>
</feature>
<feature type="binding site" evidence="1">
    <location>
        <begin position="17"/>
        <end position="20"/>
    </location>
    <ligand>
        <name>NAD(+)</name>
        <dbReference type="ChEBI" id="CHEBI:57540"/>
    </ligand>
</feature>
<feature type="binding site" evidence="1">
    <location>
        <begin position="166"/>
        <end position="174"/>
    </location>
    <ligand>
        <name>NAD(+)</name>
        <dbReference type="ChEBI" id="CHEBI:57540"/>
    </ligand>
</feature>
<feature type="binding site" evidence="1">
    <location>
        <position position="298"/>
    </location>
    <ligand>
        <name>NAD(+)</name>
        <dbReference type="ChEBI" id="CHEBI:57540"/>
    </ligand>
</feature>
<accession>Q5YUH5</accession>
<keyword id="KW-0058">Aromatic hydrocarbons catabolism</keyword>
<keyword id="KW-0520">NAD</keyword>
<keyword id="KW-0560">Oxidoreductase</keyword>
<keyword id="KW-1185">Reference proteome</keyword>
<protein>
    <recommendedName>
        <fullName evidence="1">Acetaldehyde dehydrogenase 3</fullName>
        <ecNumber evidence="1">1.2.1.10</ecNumber>
    </recommendedName>
    <alternativeName>
        <fullName evidence="1">Acetaldehyde dehydrogenase [acetylating] 3</fullName>
    </alternativeName>
</protein>
<proteinExistence type="inferred from homology"/>
<comment type="catalytic activity">
    <reaction evidence="1">
        <text>acetaldehyde + NAD(+) + CoA = acetyl-CoA + NADH + H(+)</text>
        <dbReference type="Rhea" id="RHEA:23288"/>
        <dbReference type="ChEBI" id="CHEBI:15343"/>
        <dbReference type="ChEBI" id="CHEBI:15378"/>
        <dbReference type="ChEBI" id="CHEBI:57287"/>
        <dbReference type="ChEBI" id="CHEBI:57288"/>
        <dbReference type="ChEBI" id="CHEBI:57540"/>
        <dbReference type="ChEBI" id="CHEBI:57945"/>
        <dbReference type="EC" id="1.2.1.10"/>
    </reaction>
</comment>
<comment type="similarity">
    <text evidence="1">Belongs to the acetaldehyde dehydrogenase family.</text>
</comment>
<evidence type="ECO:0000255" key="1">
    <source>
        <dbReference type="HAMAP-Rule" id="MF_01657"/>
    </source>
</evidence>
<name>ACDH3_NOCFA</name>